<organism>
    <name type="scientific">Aspergillus fumigatus (strain CBS 144.89 / FGSC A1163 / CEA10)</name>
    <name type="common">Neosartorya fumigata</name>
    <dbReference type="NCBI Taxonomy" id="451804"/>
    <lineage>
        <taxon>Eukaryota</taxon>
        <taxon>Fungi</taxon>
        <taxon>Dikarya</taxon>
        <taxon>Ascomycota</taxon>
        <taxon>Pezizomycotina</taxon>
        <taxon>Eurotiomycetes</taxon>
        <taxon>Eurotiomycetidae</taxon>
        <taxon>Eurotiales</taxon>
        <taxon>Aspergillaceae</taxon>
        <taxon>Aspergillus</taxon>
        <taxon>Aspergillus subgen. Fumigati</taxon>
    </lineage>
</organism>
<accession>B0YDE8</accession>
<feature type="signal peptide" evidence="2">
    <location>
        <begin position="1"/>
        <end position="23"/>
    </location>
</feature>
<feature type="chain" id="PRO_0000393666" description="Probable exopolygalacturonase X">
    <location>
        <begin position="24"/>
        <end position="432"/>
    </location>
</feature>
<feature type="repeat" description="PbH1 1">
    <location>
        <begin position="231"/>
        <end position="252"/>
    </location>
</feature>
<feature type="repeat" description="PbH1 2">
    <location>
        <begin position="254"/>
        <end position="274"/>
    </location>
</feature>
<feature type="repeat" description="PbH1 3">
    <location>
        <begin position="285"/>
        <end position="306"/>
    </location>
</feature>
<feature type="repeat" description="PbH1 4">
    <location>
        <begin position="327"/>
        <end position="348"/>
    </location>
</feature>
<feature type="repeat" description="PbH1 5">
    <location>
        <begin position="362"/>
        <end position="394"/>
    </location>
</feature>
<feature type="active site" description="Proton donor" evidence="3">
    <location>
        <position position="245"/>
    </location>
</feature>
<feature type="active site" evidence="3">
    <location>
        <position position="268"/>
    </location>
</feature>
<feature type="glycosylation site" description="N-linked (GlcNAc...) asparagine" evidence="2">
    <location>
        <position position="113"/>
    </location>
</feature>
<feature type="glycosylation site" description="N-linked (GlcNAc...) asparagine" evidence="2">
    <location>
        <position position="129"/>
    </location>
</feature>
<feature type="glycosylation site" description="N-linked (GlcNAc...) asparagine" evidence="2">
    <location>
        <position position="199"/>
    </location>
</feature>
<feature type="glycosylation site" description="N-linked (GlcNAc...) asparagine" evidence="2">
    <location>
        <position position="253"/>
    </location>
</feature>
<feature type="glycosylation site" description="N-linked (GlcNAc...) asparagine" evidence="2">
    <location>
        <position position="265"/>
    </location>
</feature>
<feature type="glycosylation site" description="N-linked (GlcNAc...) asparagine" evidence="2">
    <location>
        <position position="292"/>
    </location>
</feature>
<feature type="glycosylation site" description="N-linked (GlcNAc...) asparagine" evidence="2">
    <location>
        <position position="297"/>
    </location>
</feature>
<feature type="glycosylation site" description="N-linked (GlcNAc...) asparagine" evidence="2">
    <location>
        <position position="329"/>
    </location>
</feature>
<feature type="glycosylation site" description="N-linked (GlcNAc...) asparagine" evidence="2">
    <location>
        <position position="354"/>
    </location>
</feature>
<feature type="glycosylation site" description="N-linked (GlcNAc...) asparagine" evidence="2">
    <location>
        <position position="364"/>
    </location>
</feature>
<feature type="disulfide bond" evidence="1">
    <location>
        <begin position="247"/>
        <end position="264"/>
    </location>
</feature>
<feature type="disulfide bond" evidence="1">
    <location>
        <begin position="392"/>
        <end position="398"/>
    </location>
</feature>
<reference key="1">
    <citation type="journal article" date="2008" name="PLoS Genet.">
        <title>Genomic islands in the pathogenic filamentous fungus Aspergillus fumigatus.</title>
        <authorList>
            <person name="Fedorova N.D."/>
            <person name="Khaldi N."/>
            <person name="Joardar V.S."/>
            <person name="Maiti R."/>
            <person name="Amedeo P."/>
            <person name="Anderson M.J."/>
            <person name="Crabtree J."/>
            <person name="Silva J.C."/>
            <person name="Badger J.H."/>
            <person name="Albarraq A."/>
            <person name="Angiuoli S."/>
            <person name="Bussey H."/>
            <person name="Bowyer P."/>
            <person name="Cotty P.J."/>
            <person name="Dyer P.S."/>
            <person name="Egan A."/>
            <person name="Galens K."/>
            <person name="Fraser-Liggett C.M."/>
            <person name="Haas B.J."/>
            <person name="Inman J.M."/>
            <person name="Kent R."/>
            <person name="Lemieux S."/>
            <person name="Malavazi I."/>
            <person name="Orvis J."/>
            <person name="Roemer T."/>
            <person name="Ronning C.M."/>
            <person name="Sundaram J.P."/>
            <person name="Sutton G."/>
            <person name="Turner G."/>
            <person name="Venter J.C."/>
            <person name="White O.R."/>
            <person name="Whitty B.R."/>
            <person name="Youngman P."/>
            <person name="Wolfe K.H."/>
            <person name="Goldman G.H."/>
            <person name="Wortman J.R."/>
            <person name="Jiang B."/>
            <person name="Denning D.W."/>
            <person name="Nierman W.C."/>
        </authorList>
    </citation>
    <scope>NUCLEOTIDE SEQUENCE [LARGE SCALE GENOMIC DNA]</scope>
    <source>
        <strain>CBS 144.89 / FGSC A1163 / CEA10</strain>
    </source>
</reference>
<proteinExistence type="inferred from homology"/>
<evidence type="ECO:0000250" key="1"/>
<evidence type="ECO:0000255" key="2"/>
<evidence type="ECO:0000255" key="3">
    <source>
        <dbReference type="PROSITE-ProRule" id="PRU10052"/>
    </source>
</evidence>
<evidence type="ECO:0000305" key="4"/>
<keyword id="KW-0961">Cell wall biogenesis/degradation</keyword>
<keyword id="KW-1015">Disulfide bond</keyword>
<keyword id="KW-0325">Glycoprotein</keyword>
<keyword id="KW-0326">Glycosidase</keyword>
<keyword id="KW-0378">Hydrolase</keyword>
<keyword id="KW-0677">Repeat</keyword>
<keyword id="KW-0964">Secreted</keyword>
<keyword id="KW-0732">Signal</keyword>
<dbReference type="EC" id="3.2.1.67"/>
<dbReference type="EMBL" id="DS499602">
    <property type="protein sequence ID" value="EDP47682.1"/>
    <property type="status" value="ALT_SEQ"/>
    <property type="molecule type" value="Genomic_DNA"/>
</dbReference>
<dbReference type="SMR" id="B0YDE8"/>
<dbReference type="GlyCosmos" id="B0YDE8">
    <property type="glycosylation" value="10 sites, No reported glycans"/>
</dbReference>
<dbReference type="OrthoDB" id="41488at5052"/>
<dbReference type="PhylomeDB" id="B0YDE8"/>
<dbReference type="Proteomes" id="UP000001699">
    <property type="component" value="Unassembled WGS sequence"/>
</dbReference>
<dbReference type="GO" id="GO:0005576">
    <property type="term" value="C:extracellular region"/>
    <property type="evidence" value="ECO:0000250"/>
    <property type="project" value="UniProtKB"/>
</dbReference>
<dbReference type="GO" id="GO:0047911">
    <property type="term" value="F:galacturan 1,4-alpha-galacturonidase activity"/>
    <property type="evidence" value="ECO:0007669"/>
    <property type="project" value="UniProtKB-EC"/>
</dbReference>
<dbReference type="GO" id="GO:0004650">
    <property type="term" value="F:polygalacturonase activity"/>
    <property type="evidence" value="ECO:0000250"/>
    <property type="project" value="UniProtKB"/>
</dbReference>
<dbReference type="GO" id="GO:0071555">
    <property type="term" value="P:cell wall organization"/>
    <property type="evidence" value="ECO:0007669"/>
    <property type="project" value="UniProtKB-KW"/>
</dbReference>
<dbReference type="GO" id="GO:0045490">
    <property type="term" value="P:pectin catabolic process"/>
    <property type="evidence" value="ECO:0000250"/>
    <property type="project" value="UniProtKB"/>
</dbReference>
<dbReference type="FunFam" id="2.160.20.10:FF:000027">
    <property type="entry name" value="Probable exopolygalacturonase X"/>
    <property type="match status" value="1"/>
</dbReference>
<dbReference type="Gene3D" id="2.160.20.10">
    <property type="entry name" value="Single-stranded right-handed beta-helix, Pectin lyase-like"/>
    <property type="match status" value="1"/>
</dbReference>
<dbReference type="InterPro" id="IPR000743">
    <property type="entry name" value="Glyco_hydro_28"/>
</dbReference>
<dbReference type="InterPro" id="IPR006626">
    <property type="entry name" value="PbH1"/>
</dbReference>
<dbReference type="InterPro" id="IPR012334">
    <property type="entry name" value="Pectin_lyas_fold"/>
</dbReference>
<dbReference type="InterPro" id="IPR011050">
    <property type="entry name" value="Pectin_lyase_fold/virulence"/>
</dbReference>
<dbReference type="PANTHER" id="PTHR31736">
    <property type="match status" value="1"/>
</dbReference>
<dbReference type="PANTHER" id="PTHR31736:SF14">
    <property type="entry name" value="EXOPOLYGALACTURONASE X-1-RELATED"/>
    <property type="match status" value="1"/>
</dbReference>
<dbReference type="Pfam" id="PF00295">
    <property type="entry name" value="Glyco_hydro_28"/>
    <property type="match status" value="1"/>
</dbReference>
<dbReference type="SMART" id="SM00710">
    <property type="entry name" value="PbH1"/>
    <property type="match status" value="5"/>
</dbReference>
<dbReference type="SUPFAM" id="SSF51126">
    <property type="entry name" value="Pectin lyase-like"/>
    <property type="match status" value="1"/>
</dbReference>
<dbReference type="PROSITE" id="PS00502">
    <property type="entry name" value="POLYGALACTURONASE"/>
    <property type="match status" value="1"/>
</dbReference>
<protein>
    <recommendedName>
        <fullName>Probable exopolygalacturonase X</fullName>
        <shortName>ExoPG</shortName>
        <ecNumber>3.2.1.67</ecNumber>
    </recommendedName>
    <alternativeName>
        <fullName>Galacturan 1,4-alpha-galacturonidase</fullName>
    </alternativeName>
    <alternativeName>
        <fullName>Poly(1,4-alpha-D-galacturonide)galacturonohydrolase</fullName>
    </alternativeName>
</protein>
<name>PGLRX_ASPFC</name>
<gene>
    <name type="primary">pgaX</name>
    <name type="ORF">AFUB_095310</name>
</gene>
<comment type="function">
    <text evidence="1">Specific in hydrolyzing the terminal glycosidic bond of polygalacturonic acid and oligogalacturonates.</text>
</comment>
<comment type="catalytic activity">
    <reaction>
        <text>[(1-&gt;4)-alpha-D-galacturonosyl](n) + H2O = alpha-D-galacturonate + [(1-&gt;4)-alpha-D-galacturonosyl](n-1)</text>
        <dbReference type="Rhea" id="RHEA:14117"/>
        <dbReference type="Rhea" id="RHEA-COMP:14570"/>
        <dbReference type="Rhea" id="RHEA-COMP:14572"/>
        <dbReference type="ChEBI" id="CHEBI:15377"/>
        <dbReference type="ChEBI" id="CHEBI:58658"/>
        <dbReference type="ChEBI" id="CHEBI:140523"/>
        <dbReference type="EC" id="3.2.1.67"/>
    </reaction>
</comment>
<comment type="subcellular location">
    <subcellularLocation>
        <location evidence="1">Secreted</location>
    </subcellularLocation>
</comment>
<comment type="similarity">
    <text evidence="4">Belongs to the glycosyl hydrolase 28 family.</text>
</comment>
<comment type="sequence caution" evidence="4">
    <conflict type="erroneous gene model prediction">
        <sequence resource="EMBL-CDS" id="EDP47682"/>
    </conflict>
</comment>
<sequence length="432" mass="47311">MKFSYSFVQVVTLLLSLSPSVEGFTRSRNDACKPNHPFRPLPPSQPRTKTCHVVSNGHGKDDSKNIMKALHKCNNGGKVVFDANKVYTVGTALDMTFLKHIDLEVLGKIQFTNDTDYWQANSFKHGFQNATTFFQLGGEDVNVYGGGTLDGNGQVWYDLYAEDALILRPILFGVIGLKGGTIGPLKLRYSPQWYQLVANSSDVIFDGIDISGYSSSKNEAKNTDGWDTYRSDNIVIQNSVINNGDDCVSFKPNSTNILVQNLHCNGSHGISVGSLGQYKGEVDIVQNVLVYNISMYNASDGARIKVWPGVSSAMSEDLQGGGGLGSVKNVTYNQMYIENVDWAIEVTQCYGQKNLTLCNEYPSNLTISDIHFKNFRGTTSGKRDPNVGTIVCSSPNVCSDIYAENIDVKSPKGTDNFVCTNVDKSLLDVNCA</sequence>